<evidence type="ECO:0000250" key="1"/>
<evidence type="ECO:0000256" key="2">
    <source>
        <dbReference type="SAM" id="MobiDB-lite"/>
    </source>
</evidence>
<evidence type="ECO:0000305" key="3"/>
<sequence length="437" mass="50384">MTSADIRDVFELPPPEIGNKQKSKTPTERRPEGISRELYSLLGENSAPLAIYQKKFKEKPKVSHKAKNWVRQPFSISSRKDDFTLHHWVLKSEVDSEASYKFEKFNVPLFIIDYTDEEYQNYLKDEDWNKDETDYLFRLCKDYDLRFFVIADRYDNEKYKKHRTLEDLKDRFYSVSRKILLARNPINSMTAAQSSLLNTMEYNKEQEVIRKKYLIGLASRTPEEVAEEEALFIELKRIETSQAKLLSDRDEVLRLLDEQKGDGGIHEYHTSAGMSSLIQDMINSQRTKNKVEEAIVSSSAPSSGVSSVLNTPTRPHALSTPRIRYGPQPTDPQFGITWHEKLHPGTFVRSQKIPAIKASLSQRVSSVMTELGVSSRLIMPTAKNFEKFVELQNSIVSLLELKRKVDRLSQETEIQDKLSRKRSASPDGSESKKHISQ</sequence>
<reference key="1">
    <citation type="journal article" date="2002" name="Nature">
        <title>The genome sequence of Schizosaccharomyces pombe.</title>
        <authorList>
            <person name="Wood V."/>
            <person name="Gwilliam R."/>
            <person name="Rajandream M.A."/>
            <person name="Lyne M.H."/>
            <person name="Lyne R."/>
            <person name="Stewart A."/>
            <person name="Sgouros J.G."/>
            <person name="Peat N."/>
            <person name="Hayles J."/>
            <person name="Baker S.G."/>
            <person name="Basham D."/>
            <person name="Bowman S."/>
            <person name="Brooks K."/>
            <person name="Brown D."/>
            <person name="Brown S."/>
            <person name="Chillingworth T."/>
            <person name="Churcher C.M."/>
            <person name="Collins M."/>
            <person name="Connor R."/>
            <person name="Cronin A."/>
            <person name="Davis P."/>
            <person name="Feltwell T."/>
            <person name="Fraser A."/>
            <person name="Gentles S."/>
            <person name="Goble A."/>
            <person name="Hamlin N."/>
            <person name="Harris D.E."/>
            <person name="Hidalgo J."/>
            <person name="Hodgson G."/>
            <person name="Holroyd S."/>
            <person name="Hornsby T."/>
            <person name="Howarth S."/>
            <person name="Huckle E.J."/>
            <person name="Hunt S."/>
            <person name="Jagels K."/>
            <person name="James K.D."/>
            <person name="Jones L."/>
            <person name="Jones M."/>
            <person name="Leather S."/>
            <person name="McDonald S."/>
            <person name="McLean J."/>
            <person name="Mooney P."/>
            <person name="Moule S."/>
            <person name="Mungall K.L."/>
            <person name="Murphy L.D."/>
            <person name="Niblett D."/>
            <person name="Odell C."/>
            <person name="Oliver K."/>
            <person name="O'Neil S."/>
            <person name="Pearson D."/>
            <person name="Quail M.A."/>
            <person name="Rabbinowitsch E."/>
            <person name="Rutherford K.M."/>
            <person name="Rutter S."/>
            <person name="Saunders D."/>
            <person name="Seeger K."/>
            <person name="Sharp S."/>
            <person name="Skelton J."/>
            <person name="Simmonds M.N."/>
            <person name="Squares R."/>
            <person name="Squares S."/>
            <person name="Stevens K."/>
            <person name="Taylor K."/>
            <person name="Taylor R.G."/>
            <person name="Tivey A."/>
            <person name="Walsh S.V."/>
            <person name="Warren T."/>
            <person name="Whitehead S."/>
            <person name="Woodward J.R."/>
            <person name="Volckaert G."/>
            <person name="Aert R."/>
            <person name="Robben J."/>
            <person name="Grymonprez B."/>
            <person name="Weltjens I."/>
            <person name="Vanstreels E."/>
            <person name="Rieger M."/>
            <person name="Schaefer M."/>
            <person name="Mueller-Auer S."/>
            <person name="Gabel C."/>
            <person name="Fuchs M."/>
            <person name="Duesterhoeft A."/>
            <person name="Fritzc C."/>
            <person name="Holzer E."/>
            <person name="Moestl D."/>
            <person name="Hilbert H."/>
            <person name="Borzym K."/>
            <person name="Langer I."/>
            <person name="Beck A."/>
            <person name="Lehrach H."/>
            <person name="Reinhardt R."/>
            <person name="Pohl T.M."/>
            <person name="Eger P."/>
            <person name="Zimmermann W."/>
            <person name="Wedler H."/>
            <person name="Wambutt R."/>
            <person name="Purnelle B."/>
            <person name="Goffeau A."/>
            <person name="Cadieu E."/>
            <person name="Dreano S."/>
            <person name="Gloux S."/>
            <person name="Lelaure V."/>
            <person name="Mottier S."/>
            <person name="Galibert F."/>
            <person name="Aves S.J."/>
            <person name="Xiang Z."/>
            <person name="Hunt C."/>
            <person name="Moore K."/>
            <person name="Hurst S.M."/>
            <person name="Lucas M."/>
            <person name="Rochet M."/>
            <person name="Gaillardin C."/>
            <person name="Tallada V.A."/>
            <person name="Garzon A."/>
            <person name="Thode G."/>
            <person name="Daga R.R."/>
            <person name="Cruzado L."/>
            <person name="Jimenez J."/>
            <person name="Sanchez M."/>
            <person name="del Rey F."/>
            <person name="Benito J."/>
            <person name="Dominguez A."/>
            <person name="Revuelta J.L."/>
            <person name="Moreno S."/>
            <person name="Armstrong J."/>
            <person name="Forsburg S.L."/>
            <person name="Cerutti L."/>
            <person name="Lowe T."/>
            <person name="McCombie W.R."/>
            <person name="Paulsen I."/>
            <person name="Potashkin J."/>
            <person name="Shpakovski G.V."/>
            <person name="Ussery D."/>
            <person name="Barrell B.G."/>
            <person name="Nurse P."/>
        </authorList>
    </citation>
    <scope>NUCLEOTIDE SEQUENCE [LARGE SCALE GENOMIC DNA]</scope>
    <source>
        <strain>972 / ATCC 24843</strain>
    </source>
</reference>
<dbReference type="EMBL" id="CU329670">
    <property type="protein sequence ID" value="CAB11497.2"/>
    <property type="molecule type" value="Genomic_DNA"/>
</dbReference>
<dbReference type="PIR" id="T39236">
    <property type="entry name" value="T39236"/>
</dbReference>
<dbReference type="RefSeq" id="NP_593568.2">
    <property type="nucleotide sequence ID" value="NM_001019001.3"/>
</dbReference>
<dbReference type="SMR" id="O14308"/>
<dbReference type="BioGRID" id="278876">
    <property type="interactions" value="8"/>
</dbReference>
<dbReference type="FunCoup" id="O14308">
    <property type="interactions" value="672"/>
</dbReference>
<dbReference type="IntAct" id="O14308">
    <property type="interactions" value="1"/>
</dbReference>
<dbReference type="MINT" id="O14308"/>
<dbReference type="STRING" id="284812.O14308"/>
<dbReference type="iPTMnet" id="O14308"/>
<dbReference type="PaxDb" id="4896-SPAC9G1.13c.1"/>
<dbReference type="EnsemblFungi" id="SPAC9G1.13c.1">
    <property type="protein sequence ID" value="SPAC9G1.13c.1:pep"/>
    <property type="gene ID" value="SPAC9G1.13c"/>
</dbReference>
<dbReference type="GeneID" id="2542412"/>
<dbReference type="KEGG" id="spo:2542412"/>
<dbReference type="PomBase" id="SPAC9G1.13c">
    <property type="gene designation" value="swc4"/>
</dbReference>
<dbReference type="VEuPathDB" id="FungiDB:SPAC9G1.13c"/>
<dbReference type="eggNOG" id="KOG2656">
    <property type="taxonomic scope" value="Eukaryota"/>
</dbReference>
<dbReference type="HOGENOM" id="CLU_018539_4_1_1"/>
<dbReference type="InParanoid" id="O14308"/>
<dbReference type="OMA" id="GNTTMYQ"/>
<dbReference type="PhylomeDB" id="O14308"/>
<dbReference type="PRO" id="PR:O14308"/>
<dbReference type="Proteomes" id="UP000002485">
    <property type="component" value="Chromosome I"/>
</dbReference>
<dbReference type="GO" id="GO:0035267">
    <property type="term" value="C:NuA4 histone acetyltransferase complex"/>
    <property type="evidence" value="ECO:0000314"/>
    <property type="project" value="PomBase"/>
</dbReference>
<dbReference type="GO" id="GO:0005634">
    <property type="term" value="C:nucleus"/>
    <property type="evidence" value="ECO:0007005"/>
    <property type="project" value="PomBase"/>
</dbReference>
<dbReference type="GO" id="GO:0000812">
    <property type="term" value="C:Swr1 complex"/>
    <property type="evidence" value="ECO:0000314"/>
    <property type="project" value="PomBase"/>
</dbReference>
<dbReference type="GO" id="GO:0003677">
    <property type="term" value="F:DNA binding"/>
    <property type="evidence" value="ECO:0000266"/>
    <property type="project" value="PomBase"/>
</dbReference>
<dbReference type="GO" id="GO:0003714">
    <property type="term" value="F:transcription corepressor activity"/>
    <property type="evidence" value="ECO:0000318"/>
    <property type="project" value="GO_Central"/>
</dbReference>
<dbReference type="GO" id="GO:0006281">
    <property type="term" value="P:DNA repair"/>
    <property type="evidence" value="ECO:0007669"/>
    <property type="project" value="UniProtKB-KW"/>
</dbReference>
<dbReference type="GO" id="GO:0000122">
    <property type="term" value="P:negative regulation of transcription by RNA polymerase II"/>
    <property type="evidence" value="ECO:0000318"/>
    <property type="project" value="GO_Central"/>
</dbReference>
<dbReference type="GO" id="GO:0045815">
    <property type="term" value="P:transcription initiation-coupled chromatin remodeling"/>
    <property type="evidence" value="ECO:0000305"/>
    <property type="project" value="PomBase"/>
</dbReference>
<dbReference type="FunFam" id="1.10.10.60:FF:000521">
    <property type="entry name" value="SWR1-complex protein 4"/>
    <property type="match status" value="1"/>
</dbReference>
<dbReference type="Gene3D" id="1.10.10.60">
    <property type="entry name" value="Homeodomain-like"/>
    <property type="match status" value="1"/>
</dbReference>
<dbReference type="InterPro" id="IPR032563">
    <property type="entry name" value="DAMP1_SANT-like"/>
</dbReference>
<dbReference type="InterPro" id="IPR001005">
    <property type="entry name" value="SANT/Myb"/>
</dbReference>
<dbReference type="InterPro" id="IPR027109">
    <property type="entry name" value="Swc4/Dmap1"/>
</dbReference>
<dbReference type="PANTHER" id="PTHR12855:SF10">
    <property type="entry name" value="DNA METHYLTRANSFERASE 1-ASSOCIATED PROTEIN 1"/>
    <property type="match status" value="1"/>
</dbReference>
<dbReference type="PANTHER" id="PTHR12855">
    <property type="entry name" value="DNA METHYLTRANSFERASE 1-ASSOCIATED PROTEIN 1 FAMILY MEMBER"/>
    <property type="match status" value="1"/>
</dbReference>
<dbReference type="Pfam" id="PF16282">
    <property type="entry name" value="SANT_DAMP1_like"/>
    <property type="match status" value="1"/>
</dbReference>
<dbReference type="SMART" id="SM00717">
    <property type="entry name" value="SANT"/>
    <property type="match status" value="1"/>
</dbReference>
<proteinExistence type="inferred from homology"/>
<comment type="function">
    <text evidence="1">Component of the SWR1 complex which mediates the ATP-dependent exchange of histone H2A for the H2A variant HZT1 leading to transcriptional regulation of selected genes by chromatin remodeling. Component of the NuA4 histone acetyltransferase complex which is involved in transcriptional activation of selected genes principally by acetylation of nucleosomal histone H4 and H2A. The NuA4 complex is also involved in DNA repair (By similarity).</text>
</comment>
<comment type="subunit">
    <text evidence="1">Component of the SWR1 chromatin-remodeling complex and of the NuA4 histone acetyltransferase complex.</text>
</comment>
<comment type="subcellular location">
    <subcellularLocation>
        <location evidence="1">Nucleus</location>
    </subcellularLocation>
</comment>
<comment type="similarity">
    <text evidence="3">Belongs to the SWC4 family.</text>
</comment>
<keyword id="KW-0010">Activator</keyword>
<keyword id="KW-0156">Chromatin regulator</keyword>
<keyword id="KW-0227">DNA damage</keyword>
<keyword id="KW-0234">DNA repair</keyword>
<keyword id="KW-0539">Nucleus</keyword>
<keyword id="KW-1185">Reference proteome</keyword>
<keyword id="KW-0804">Transcription</keyword>
<keyword id="KW-0805">Transcription regulation</keyword>
<gene>
    <name type="primary">swc4</name>
    <name type="ORF">SPAC9G1.13c</name>
</gene>
<accession>O14308</accession>
<feature type="chain" id="PRO_0000076344" description="SWR1-complex protein 4">
    <location>
        <begin position="1"/>
        <end position="437"/>
    </location>
</feature>
<feature type="domain" description="SANT">
    <location>
        <begin position="125"/>
        <end position="176"/>
    </location>
</feature>
<feature type="region of interest" description="Disordered" evidence="2">
    <location>
        <begin position="1"/>
        <end position="33"/>
    </location>
</feature>
<feature type="region of interest" description="Disordered" evidence="2">
    <location>
        <begin position="302"/>
        <end position="328"/>
    </location>
</feature>
<feature type="region of interest" description="Disordered" evidence="2">
    <location>
        <begin position="408"/>
        <end position="437"/>
    </location>
</feature>
<feature type="compositionally biased region" description="Basic and acidic residues" evidence="2">
    <location>
        <begin position="1"/>
        <end position="10"/>
    </location>
</feature>
<feature type="compositionally biased region" description="Basic and acidic residues" evidence="2">
    <location>
        <begin position="408"/>
        <end position="418"/>
    </location>
</feature>
<name>SWC4_SCHPO</name>
<organism>
    <name type="scientific">Schizosaccharomyces pombe (strain 972 / ATCC 24843)</name>
    <name type="common">Fission yeast</name>
    <dbReference type="NCBI Taxonomy" id="284812"/>
    <lineage>
        <taxon>Eukaryota</taxon>
        <taxon>Fungi</taxon>
        <taxon>Dikarya</taxon>
        <taxon>Ascomycota</taxon>
        <taxon>Taphrinomycotina</taxon>
        <taxon>Schizosaccharomycetes</taxon>
        <taxon>Schizosaccharomycetales</taxon>
        <taxon>Schizosaccharomycetaceae</taxon>
        <taxon>Schizosaccharomyces</taxon>
    </lineage>
</organism>
<protein>
    <recommendedName>
        <fullName>SWR1-complex protein 4</fullName>
    </recommendedName>
</protein>